<evidence type="ECO:0000255" key="1">
    <source>
        <dbReference type="HAMAP-Rule" id="MF_01454"/>
    </source>
</evidence>
<evidence type="ECO:0000255" key="2">
    <source>
        <dbReference type="PROSITE-ProRule" id="PRU01229"/>
    </source>
</evidence>
<evidence type="ECO:0000255" key="3">
    <source>
        <dbReference type="PROSITE-ProRule" id="PRU01231"/>
    </source>
</evidence>
<protein>
    <recommendedName>
        <fullName evidence="1">GTPase Obg</fullName>
        <ecNumber evidence="1">3.6.5.-</ecNumber>
    </recommendedName>
    <alternativeName>
        <fullName evidence="1">GTP-binding protein Obg</fullName>
    </alternativeName>
</protein>
<reference key="1">
    <citation type="submission" date="2007-02" db="EMBL/GenBank/DDBJ databases">
        <title>Complete sequence of Clostridium thermocellum ATCC 27405.</title>
        <authorList>
            <consortium name="US DOE Joint Genome Institute"/>
            <person name="Copeland A."/>
            <person name="Lucas S."/>
            <person name="Lapidus A."/>
            <person name="Barry K."/>
            <person name="Detter J.C."/>
            <person name="Glavina del Rio T."/>
            <person name="Hammon N."/>
            <person name="Israni S."/>
            <person name="Dalin E."/>
            <person name="Tice H."/>
            <person name="Pitluck S."/>
            <person name="Chertkov O."/>
            <person name="Brettin T."/>
            <person name="Bruce D."/>
            <person name="Han C."/>
            <person name="Tapia R."/>
            <person name="Gilna P."/>
            <person name="Schmutz J."/>
            <person name="Larimer F."/>
            <person name="Land M."/>
            <person name="Hauser L."/>
            <person name="Kyrpides N."/>
            <person name="Mikhailova N."/>
            <person name="Wu J.H.D."/>
            <person name="Newcomb M."/>
            <person name="Richardson P."/>
        </authorList>
    </citation>
    <scope>NUCLEOTIDE SEQUENCE [LARGE SCALE GENOMIC DNA]</scope>
    <source>
        <strain>ATCC 27405 / DSM 1237 / JCM 9322 / NBRC 103400 / NCIMB 10682 / NRRL B-4536 / VPI 7372</strain>
    </source>
</reference>
<organism>
    <name type="scientific">Acetivibrio thermocellus (strain ATCC 27405 / DSM 1237 / JCM 9322 / NBRC 103400 / NCIMB 10682 / NRRL B-4536 / VPI 7372)</name>
    <name type="common">Clostridium thermocellum</name>
    <dbReference type="NCBI Taxonomy" id="203119"/>
    <lineage>
        <taxon>Bacteria</taxon>
        <taxon>Bacillati</taxon>
        <taxon>Bacillota</taxon>
        <taxon>Clostridia</taxon>
        <taxon>Eubacteriales</taxon>
        <taxon>Oscillospiraceae</taxon>
        <taxon>Acetivibrio</taxon>
    </lineage>
</organism>
<accession>A3DBS5</accession>
<dbReference type="EC" id="3.6.5.-" evidence="1"/>
<dbReference type="EMBL" id="CP000568">
    <property type="protein sequence ID" value="ABN51404.1"/>
    <property type="molecule type" value="Genomic_DNA"/>
</dbReference>
<dbReference type="SMR" id="A3DBS5"/>
<dbReference type="STRING" id="203119.Cthe_0163"/>
<dbReference type="GeneID" id="35803849"/>
<dbReference type="KEGG" id="cth:Cthe_0163"/>
<dbReference type="eggNOG" id="COG0536">
    <property type="taxonomic scope" value="Bacteria"/>
</dbReference>
<dbReference type="HOGENOM" id="CLU_011747_2_1_9"/>
<dbReference type="OrthoDB" id="9807318at2"/>
<dbReference type="Proteomes" id="UP000002145">
    <property type="component" value="Chromosome"/>
</dbReference>
<dbReference type="GO" id="GO:0005737">
    <property type="term" value="C:cytoplasm"/>
    <property type="evidence" value="ECO:0007669"/>
    <property type="project" value="UniProtKB-SubCell"/>
</dbReference>
<dbReference type="GO" id="GO:0005525">
    <property type="term" value="F:GTP binding"/>
    <property type="evidence" value="ECO:0007669"/>
    <property type="project" value="UniProtKB-UniRule"/>
</dbReference>
<dbReference type="GO" id="GO:0003924">
    <property type="term" value="F:GTPase activity"/>
    <property type="evidence" value="ECO:0007669"/>
    <property type="project" value="UniProtKB-UniRule"/>
</dbReference>
<dbReference type="GO" id="GO:0000287">
    <property type="term" value="F:magnesium ion binding"/>
    <property type="evidence" value="ECO:0007669"/>
    <property type="project" value="InterPro"/>
</dbReference>
<dbReference type="GO" id="GO:0042254">
    <property type="term" value="P:ribosome biogenesis"/>
    <property type="evidence" value="ECO:0007669"/>
    <property type="project" value="UniProtKB-UniRule"/>
</dbReference>
<dbReference type="CDD" id="cd01898">
    <property type="entry name" value="Obg"/>
    <property type="match status" value="1"/>
</dbReference>
<dbReference type="FunFam" id="2.70.210.12:FF:000001">
    <property type="entry name" value="GTPase Obg"/>
    <property type="match status" value="1"/>
</dbReference>
<dbReference type="Gene3D" id="3.30.300.350">
    <property type="entry name" value="GTP-binding protein OBG, C-terminal domain"/>
    <property type="match status" value="1"/>
</dbReference>
<dbReference type="Gene3D" id="2.70.210.12">
    <property type="entry name" value="GTP1/OBG domain"/>
    <property type="match status" value="1"/>
</dbReference>
<dbReference type="Gene3D" id="3.40.50.300">
    <property type="entry name" value="P-loop containing nucleotide triphosphate hydrolases"/>
    <property type="match status" value="1"/>
</dbReference>
<dbReference type="HAMAP" id="MF_01454">
    <property type="entry name" value="GTPase_Obg"/>
    <property type="match status" value="1"/>
</dbReference>
<dbReference type="InterPro" id="IPR031167">
    <property type="entry name" value="G_OBG"/>
</dbReference>
<dbReference type="InterPro" id="IPR006073">
    <property type="entry name" value="GTP-bd"/>
</dbReference>
<dbReference type="InterPro" id="IPR014100">
    <property type="entry name" value="GTP-bd_Obg/CgtA"/>
</dbReference>
<dbReference type="InterPro" id="IPR036346">
    <property type="entry name" value="GTP-bd_prot_GTP1/OBG_C_sf"/>
</dbReference>
<dbReference type="InterPro" id="IPR006074">
    <property type="entry name" value="GTP1-OBG_CS"/>
</dbReference>
<dbReference type="InterPro" id="IPR006169">
    <property type="entry name" value="GTP1_OBG_dom"/>
</dbReference>
<dbReference type="InterPro" id="IPR036726">
    <property type="entry name" value="GTP1_OBG_dom_sf"/>
</dbReference>
<dbReference type="InterPro" id="IPR045086">
    <property type="entry name" value="OBG_GTPase"/>
</dbReference>
<dbReference type="InterPro" id="IPR015349">
    <property type="entry name" value="OCT_dom"/>
</dbReference>
<dbReference type="InterPro" id="IPR027417">
    <property type="entry name" value="P-loop_NTPase"/>
</dbReference>
<dbReference type="NCBIfam" id="TIGR02729">
    <property type="entry name" value="Obg_CgtA"/>
    <property type="match status" value="1"/>
</dbReference>
<dbReference type="NCBIfam" id="TIGR03595">
    <property type="entry name" value="Obg_CgtA_exten"/>
    <property type="match status" value="1"/>
</dbReference>
<dbReference type="NCBIfam" id="NF008954">
    <property type="entry name" value="PRK12296.1"/>
    <property type="match status" value="1"/>
</dbReference>
<dbReference type="NCBIfam" id="NF008955">
    <property type="entry name" value="PRK12297.1"/>
    <property type="match status" value="1"/>
</dbReference>
<dbReference type="NCBIfam" id="NF008956">
    <property type="entry name" value="PRK12299.1"/>
    <property type="match status" value="1"/>
</dbReference>
<dbReference type="PANTHER" id="PTHR11702">
    <property type="entry name" value="DEVELOPMENTALLY REGULATED GTP-BINDING PROTEIN-RELATED"/>
    <property type="match status" value="1"/>
</dbReference>
<dbReference type="PANTHER" id="PTHR11702:SF31">
    <property type="entry name" value="MITOCHONDRIAL RIBOSOME-ASSOCIATED GTPASE 2"/>
    <property type="match status" value="1"/>
</dbReference>
<dbReference type="Pfam" id="PF09269">
    <property type="entry name" value="DUF1967"/>
    <property type="match status" value="1"/>
</dbReference>
<dbReference type="Pfam" id="PF01018">
    <property type="entry name" value="GTP1_OBG"/>
    <property type="match status" value="1"/>
</dbReference>
<dbReference type="Pfam" id="PF01926">
    <property type="entry name" value="MMR_HSR1"/>
    <property type="match status" value="1"/>
</dbReference>
<dbReference type="PIRSF" id="PIRSF002401">
    <property type="entry name" value="GTP_bd_Obg/CgtA"/>
    <property type="match status" value="1"/>
</dbReference>
<dbReference type="PRINTS" id="PR00326">
    <property type="entry name" value="GTP1OBG"/>
</dbReference>
<dbReference type="SUPFAM" id="SSF102741">
    <property type="entry name" value="Obg GTP-binding protein C-terminal domain"/>
    <property type="match status" value="1"/>
</dbReference>
<dbReference type="SUPFAM" id="SSF82051">
    <property type="entry name" value="Obg GTP-binding protein N-terminal domain"/>
    <property type="match status" value="1"/>
</dbReference>
<dbReference type="SUPFAM" id="SSF52540">
    <property type="entry name" value="P-loop containing nucleoside triphosphate hydrolases"/>
    <property type="match status" value="1"/>
</dbReference>
<dbReference type="PROSITE" id="PS51710">
    <property type="entry name" value="G_OBG"/>
    <property type="match status" value="1"/>
</dbReference>
<dbReference type="PROSITE" id="PS00905">
    <property type="entry name" value="GTP1_OBG"/>
    <property type="match status" value="1"/>
</dbReference>
<dbReference type="PROSITE" id="PS51883">
    <property type="entry name" value="OBG"/>
    <property type="match status" value="1"/>
</dbReference>
<dbReference type="PROSITE" id="PS51881">
    <property type="entry name" value="OCT"/>
    <property type="match status" value="1"/>
</dbReference>
<comment type="function">
    <text evidence="1">An essential GTPase which binds GTP, GDP and possibly (p)ppGpp with moderate affinity, with high nucleotide exchange rates and a fairly low GTP hydrolysis rate. Plays a role in control of the cell cycle, stress response, ribosome biogenesis and in those bacteria that undergo differentiation, in morphogenesis control.</text>
</comment>
<comment type="cofactor">
    <cofactor evidence="1">
        <name>Mg(2+)</name>
        <dbReference type="ChEBI" id="CHEBI:18420"/>
    </cofactor>
</comment>
<comment type="subunit">
    <text evidence="1">Monomer.</text>
</comment>
<comment type="subcellular location">
    <subcellularLocation>
        <location evidence="1">Cytoplasm</location>
    </subcellularLocation>
</comment>
<comment type="similarity">
    <text evidence="1">Belongs to the TRAFAC class OBG-HflX-like GTPase superfamily. OBG GTPase family.</text>
</comment>
<sequence length="424" mass="46775">MFVDRARIYIKAGDGGDGAISFHREKYISKGGPDGGDGGKGGDVIFVVDEGLRTLQDFRYKTRYRAEDGQNGGSSNCSGRSGEDLIIKVPPGTLVKDEQTGRILADLVKPGKKVVIAKGGKGGAGNQHFATPTRQVPSFAKPGEPGEELWVILELKLLADVGLIGFPNVGKSTILSMVTAAQPKIANYHFTTINPNLGVVNIDAENAFVMADIPGLIEGAHQGVGLGHEFLKHIERTKLLIHVVDISGSEGRDPVQDFEVINEELKKYNPVLCERPQIIAANKMDVTGAEENLEKFRKVIEPRGYKIFPVSAASNKGLKELIYYAAQKLKELPDTVLVNDQDNEVVYTAVEEEPFNIRKENGVFVVEGSWVQRLVRSVNFDNYESLQYFQRAIRRKGIVDALESMGINEGDTVRMYDLEFEYFR</sequence>
<feature type="chain" id="PRO_0000385855" description="GTPase Obg">
    <location>
        <begin position="1"/>
        <end position="424"/>
    </location>
</feature>
<feature type="domain" description="Obg" evidence="3">
    <location>
        <begin position="1"/>
        <end position="158"/>
    </location>
</feature>
<feature type="domain" description="OBG-type G" evidence="1">
    <location>
        <begin position="159"/>
        <end position="330"/>
    </location>
</feature>
<feature type="domain" description="OCT" evidence="2">
    <location>
        <begin position="347"/>
        <end position="424"/>
    </location>
</feature>
<feature type="binding site" evidence="1">
    <location>
        <begin position="165"/>
        <end position="172"/>
    </location>
    <ligand>
        <name>GTP</name>
        <dbReference type="ChEBI" id="CHEBI:37565"/>
    </ligand>
</feature>
<feature type="binding site" evidence="1">
    <location>
        <position position="172"/>
    </location>
    <ligand>
        <name>Mg(2+)</name>
        <dbReference type="ChEBI" id="CHEBI:18420"/>
    </ligand>
</feature>
<feature type="binding site" evidence="1">
    <location>
        <begin position="190"/>
        <end position="194"/>
    </location>
    <ligand>
        <name>GTP</name>
        <dbReference type="ChEBI" id="CHEBI:37565"/>
    </ligand>
</feature>
<feature type="binding site" evidence="1">
    <location>
        <position position="192"/>
    </location>
    <ligand>
        <name>Mg(2+)</name>
        <dbReference type="ChEBI" id="CHEBI:18420"/>
    </ligand>
</feature>
<feature type="binding site" evidence="1">
    <location>
        <begin position="212"/>
        <end position="215"/>
    </location>
    <ligand>
        <name>GTP</name>
        <dbReference type="ChEBI" id="CHEBI:37565"/>
    </ligand>
</feature>
<feature type="binding site" evidence="1">
    <location>
        <begin position="282"/>
        <end position="285"/>
    </location>
    <ligand>
        <name>GTP</name>
        <dbReference type="ChEBI" id="CHEBI:37565"/>
    </ligand>
</feature>
<feature type="binding site" evidence="1">
    <location>
        <begin position="311"/>
        <end position="313"/>
    </location>
    <ligand>
        <name>GTP</name>
        <dbReference type="ChEBI" id="CHEBI:37565"/>
    </ligand>
</feature>
<keyword id="KW-0963">Cytoplasm</keyword>
<keyword id="KW-0342">GTP-binding</keyword>
<keyword id="KW-0378">Hydrolase</keyword>
<keyword id="KW-0460">Magnesium</keyword>
<keyword id="KW-0479">Metal-binding</keyword>
<keyword id="KW-0547">Nucleotide-binding</keyword>
<keyword id="KW-1185">Reference proteome</keyword>
<gene>
    <name evidence="1" type="primary">obg</name>
    <name type="ordered locus">Cthe_0163</name>
</gene>
<name>OBG_ACET2</name>
<proteinExistence type="inferred from homology"/>